<organism>
    <name type="scientific">Burkholderia thailandensis (strain ATCC 700388 / DSM 13276 / CCUG 48851 / CIP 106301 / E264)</name>
    <dbReference type="NCBI Taxonomy" id="271848"/>
    <lineage>
        <taxon>Bacteria</taxon>
        <taxon>Pseudomonadati</taxon>
        <taxon>Pseudomonadota</taxon>
        <taxon>Betaproteobacteria</taxon>
        <taxon>Burkholderiales</taxon>
        <taxon>Burkholderiaceae</taxon>
        <taxon>Burkholderia</taxon>
        <taxon>pseudomallei group</taxon>
    </lineage>
</organism>
<protein>
    <recommendedName>
        <fullName evidence="1">Ribosomal RNA large subunit methyltransferase H</fullName>
        <ecNumber evidence="1">2.1.1.177</ecNumber>
    </recommendedName>
    <alternativeName>
        <fullName evidence="1">23S rRNA (pseudouridine1915-N3)-methyltransferase</fullName>
    </alternativeName>
    <alternativeName>
        <fullName evidence="1">23S rRNA m3Psi1915 methyltransferase</fullName>
    </alternativeName>
    <alternativeName>
        <fullName evidence="1">rRNA (pseudouridine-N3-)-methyltransferase RlmH</fullName>
    </alternativeName>
</protein>
<proteinExistence type="inferred from homology"/>
<name>RLMH_BURTA</name>
<reference key="1">
    <citation type="journal article" date="2005" name="BMC Genomics">
        <title>Bacterial genome adaptation to niches: divergence of the potential virulence genes in three Burkholderia species of different survival strategies.</title>
        <authorList>
            <person name="Kim H.S."/>
            <person name="Schell M.A."/>
            <person name="Yu Y."/>
            <person name="Ulrich R.L."/>
            <person name="Sarria S.H."/>
            <person name="Nierman W.C."/>
            <person name="DeShazer D."/>
        </authorList>
    </citation>
    <scope>NUCLEOTIDE SEQUENCE [LARGE SCALE GENOMIC DNA]</scope>
    <source>
        <strain>ATCC 700388 / DSM 13276 / CCUG 48851 / CIP 106301 / E264</strain>
    </source>
</reference>
<evidence type="ECO:0000255" key="1">
    <source>
        <dbReference type="HAMAP-Rule" id="MF_00658"/>
    </source>
</evidence>
<accession>Q2SZT5</accession>
<keyword id="KW-0963">Cytoplasm</keyword>
<keyword id="KW-0489">Methyltransferase</keyword>
<keyword id="KW-0698">rRNA processing</keyword>
<keyword id="KW-0949">S-adenosyl-L-methionine</keyword>
<keyword id="KW-0808">Transferase</keyword>
<comment type="function">
    <text evidence="1">Specifically methylates the pseudouridine at position 1915 (m3Psi1915) in 23S rRNA.</text>
</comment>
<comment type="catalytic activity">
    <reaction evidence="1">
        <text>pseudouridine(1915) in 23S rRNA + S-adenosyl-L-methionine = N(3)-methylpseudouridine(1915) in 23S rRNA + S-adenosyl-L-homocysteine + H(+)</text>
        <dbReference type="Rhea" id="RHEA:42752"/>
        <dbReference type="Rhea" id="RHEA-COMP:10221"/>
        <dbReference type="Rhea" id="RHEA-COMP:10222"/>
        <dbReference type="ChEBI" id="CHEBI:15378"/>
        <dbReference type="ChEBI" id="CHEBI:57856"/>
        <dbReference type="ChEBI" id="CHEBI:59789"/>
        <dbReference type="ChEBI" id="CHEBI:65314"/>
        <dbReference type="ChEBI" id="CHEBI:74486"/>
        <dbReference type="EC" id="2.1.1.177"/>
    </reaction>
</comment>
<comment type="subunit">
    <text evidence="1">Homodimer.</text>
</comment>
<comment type="subcellular location">
    <subcellularLocation>
        <location evidence="1">Cytoplasm</location>
    </subcellularLocation>
</comment>
<comment type="similarity">
    <text evidence="1">Belongs to the RNA methyltransferase RlmH family.</text>
</comment>
<feature type="chain" id="PRO_0000260541" description="Ribosomal RNA large subunit methyltransferase H">
    <location>
        <begin position="1"/>
        <end position="156"/>
    </location>
</feature>
<feature type="binding site" evidence="1">
    <location>
        <position position="73"/>
    </location>
    <ligand>
        <name>S-adenosyl-L-methionine</name>
        <dbReference type="ChEBI" id="CHEBI:59789"/>
    </ligand>
</feature>
<feature type="binding site" evidence="1">
    <location>
        <position position="104"/>
    </location>
    <ligand>
        <name>S-adenosyl-L-methionine</name>
        <dbReference type="ChEBI" id="CHEBI:59789"/>
    </ligand>
</feature>
<feature type="binding site" evidence="1">
    <location>
        <begin position="123"/>
        <end position="128"/>
    </location>
    <ligand>
        <name>S-adenosyl-L-methionine</name>
        <dbReference type="ChEBI" id="CHEBI:59789"/>
    </ligand>
</feature>
<sequence>MKLHIVAVGHKMPGWIATGFDEYAKRMPPELRIELREVKPELRSGSRTADSVMAAERQRIEAALPKNARVVALDERGRDWTTMQLAQALPAWQQDGRDVAFVIGGADGLDPQLKSRAELLLRVSSLTLPHGMVRVLLAEQLYRAWSITQNHPYHRA</sequence>
<dbReference type="EC" id="2.1.1.177" evidence="1"/>
<dbReference type="EMBL" id="CP000086">
    <property type="protein sequence ID" value="ABC37088.1"/>
    <property type="molecule type" value="Genomic_DNA"/>
</dbReference>
<dbReference type="RefSeq" id="WP_009892289.1">
    <property type="nucleotide sequence ID" value="NZ_CP008785.1"/>
</dbReference>
<dbReference type="SMR" id="Q2SZT5"/>
<dbReference type="GeneID" id="45120761"/>
<dbReference type="KEGG" id="bte:BTH_I1010"/>
<dbReference type="HOGENOM" id="CLU_100552_1_0_4"/>
<dbReference type="Proteomes" id="UP000001930">
    <property type="component" value="Chromosome I"/>
</dbReference>
<dbReference type="GO" id="GO:0005737">
    <property type="term" value="C:cytoplasm"/>
    <property type="evidence" value="ECO:0007669"/>
    <property type="project" value="UniProtKB-SubCell"/>
</dbReference>
<dbReference type="GO" id="GO:0070038">
    <property type="term" value="F:rRNA (pseudouridine-N3-)-methyltransferase activity"/>
    <property type="evidence" value="ECO:0007669"/>
    <property type="project" value="UniProtKB-UniRule"/>
</dbReference>
<dbReference type="CDD" id="cd18081">
    <property type="entry name" value="RlmH-like"/>
    <property type="match status" value="1"/>
</dbReference>
<dbReference type="Gene3D" id="3.40.1280.10">
    <property type="match status" value="1"/>
</dbReference>
<dbReference type="HAMAP" id="MF_00658">
    <property type="entry name" value="23SrRNA_methyltr_H"/>
    <property type="match status" value="1"/>
</dbReference>
<dbReference type="InterPro" id="IPR029028">
    <property type="entry name" value="Alpha/beta_knot_MTases"/>
</dbReference>
<dbReference type="InterPro" id="IPR003742">
    <property type="entry name" value="RlmH-like"/>
</dbReference>
<dbReference type="InterPro" id="IPR029026">
    <property type="entry name" value="tRNA_m1G_MTases_N"/>
</dbReference>
<dbReference type="NCBIfam" id="NF000986">
    <property type="entry name" value="PRK00103.1-4"/>
    <property type="match status" value="1"/>
</dbReference>
<dbReference type="NCBIfam" id="TIGR00246">
    <property type="entry name" value="tRNA_RlmH_YbeA"/>
    <property type="match status" value="1"/>
</dbReference>
<dbReference type="PANTHER" id="PTHR33603">
    <property type="entry name" value="METHYLTRANSFERASE"/>
    <property type="match status" value="1"/>
</dbReference>
<dbReference type="PANTHER" id="PTHR33603:SF1">
    <property type="entry name" value="RIBOSOMAL RNA LARGE SUBUNIT METHYLTRANSFERASE H"/>
    <property type="match status" value="1"/>
</dbReference>
<dbReference type="Pfam" id="PF02590">
    <property type="entry name" value="SPOUT_MTase"/>
    <property type="match status" value="1"/>
</dbReference>
<dbReference type="PIRSF" id="PIRSF004505">
    <property type="entry name" value="MT_bac"/>
    <property type="match status" value="1"/>
</dbReference>
<dbReference type="SUPFAM" id="SSF75217">
    <property type="entry name" value="alpha/beta knot"/>
    <property type="match status" value="1"/>
</dbReference>
<gene>
    <name evidence="1" type="primary">rlmH</name>
    <name type="ordered locus">BTH_I1010</name>
</gene>